<comment type="function">
    <text evidence="2">Modulates LATS1 expression in the Hippo signaling pathway which plays a pivotal role in organ size control and tumor suppression by restricting proliferation and promoting apoptosis.</text>
</comment>
<sequence length="216" mass="25519">MSIALKQVFNKDKTFRPKRKFEPGTQRFELHKRAQASLNSGVDLRAAVQLPNGEDQNDWVAVHVVDFFNRINLIYGTICEFCTERTCPVMSGGPKYEYRWQDDLKYKKPTALPAPQYMNLLMDWIEVQINNEDIFPTCVGVPFPKNFLQICKKILCRLFRVFVHVYIHHFDRVIVMGAEAHVNTCYKHFYYFVTEMNLIDRKELEPLKEMTTRMCH</sequence>
<organism>
    <name type="scientific">Mus musculus</name>
    <name type="common">Mouse</name>
    <dbReference type="NCBI Taxonomy" id="10090"/>
    <lineage>
        <taxon>Eukaryota</taxon>
        <taxon>Metazoa</taxon>
        <taxon>Chordata</taxon>
        <taxon>Craniata</taxon>
        <taxon>Vertebrata</taxon>
        <taxon>Euteleostomi</taxon>
        <taxon>Mammalia</taxon>
        <taxon>Eutheria</taxon>
        <taxon>Euarchontoglires</taxon>
        <taxon>Glires</taxon>
        <taxon>Rodentia</taxon>
        <taxon>Myomorpha</taxon>
        <taxon>Muroidea</taxon>
        <taxon>Muridae</taxon>
        <taxon>Murinae</taxon>
        <taxon>Mus</taxon>
        <taxon>Mus</taxon>
    </lineage>
</organism>
<protein>
    <recommendedName>
        <fullName>MOB kinase activator 3B</fullName>
    </recommendedName>
    <alternativeName>
        <fullName>Mob1 homolog 2b</fullName>
    </alternativeName>
    <alternativeName>
        <fullName>Mps one binder kinase activator-like 2B</fullName>
    </alternativeName>
</protein>
<proteinExistence type="evidence at transcript level"/>
<evidence type="ECO:0000250" key="1"/>
<evidence type="ECO:0000250" key="2">
    <source>
        <dbReference type="UniProtKB" id="Q86TA1"/>
    </source>
</evidence>
<keyword id="KW-0479">Metal-binding</keyword>
<keyword id="KW-1185">Reference proteome</keyword>
<keyword id="KW-0862">Zinc</keyword>
<accession>Q8VE04</accession>
<accession>Q3U2L2</accession>
<accession>Q8BU65</accession>
<feature type="chain" id="PRO_0000193573" description="MOB kinase activator 3B">
    <location>
        <begin position="1"/>
        <end position="216"/>
    </location>
</feature>
<feature type="binding site" evidence="1">
    <location>
        <position position="82"/>
    </location>
    <ligand>
        <name>Zn(2+)</name>
        <dbReference type="ChEBI" id="CHEBI:29105"/>
    </ligand>
</feature>
<feature type="binding site" evidence="1">
    <location>
        <position position="87"/>
    </location>
    <ligand>
        <name>Zn(2+)</name>
        <dbReference type="ChEBI" id="CHEBI:29105"/>
    </ligand>
</feature>
<feature type="binding site" evidence="1">
    <location>
        <position position="164"/>
    </location>
    <ligand>
        <name>Zn(2+)</name>
        <dbReference type="ChEBI" id="CHEBI:29105"/>
    </ligand>
</feature>
<feature type="binding site" evidence="1">
    <location>
        <position position="169"/>
    </location>
    <ligand>
        <name>Zn(2+)</name>
        <dbReference type="ChEBI" id="CHEBI:29105"/>
    </ligand>
</feature>
<gene>
    <name type="primary">Mob3b</name>
    <name type="synonym">Mobkl2b</name>
</gene>
<dbReference type="EMBL" id="AK039841">
    <property type="protein sequence ID" value="BAC30466.1"/>
    <property type="molecule type" value="mRNA"/>
</dbReference>
<dbReference type="EMBL" id="AK155217">
    <property type="protein sequence ID" value="BAE33128.1"/>
    <property type="molecule type" value="mRNA"/>
</dbReference>
<dbReference type="EMBL" id="BC020028">
    <property type="protein sequence ID" value="AAH20028.1"/>
    <property type="molecule type" value="mRNA"/>
</dbReference>
<dbReference type="CCDS" id="CCDS18036.1"/>
<dbReference type="RefSeq" id="NP_835162.1">
    <property type="nucleotide sequence ID" value="NM_178061.5"/>
</dbReference>
<dbReference type="RefSeq" id="XP_006537815.1">
    <property type="nucleotide sequence ID" value="XM_006537752.5"/>
</dbReference>
<dbReference type="RefSeq" id="XP_006537816.1">
    <property type="nucleotide sequence ID" value="XM_006537753.4"/>
</dbReference>
<dbReference type="RefSeq" id="XP_006537817.1">
    <property type="nucleotide sequence ID" value="XM_006537754.2"/>
</dbReference>
<dbReference type="RefSeq" id="XP_030109254.1">
    <property type="nucleotide sequence ID" value="XM_030253394.2"/>
</dbReference>
<dbReference type="RefSeq" id="XP_036019846.1">
    <property type="nucleotide sequence ID" value="XM_036163953.1"/>
</dbReference>
<dbReference type="SMR" id="Q8VE04"/>
<dbReference type="BioGRID" id="229578">
    <property type="interactions" value="1"/>
</dbReference>
<dbReference type="FunCoup" id="Q8VE04">
    <property type="interactions" value="1597"/>
</dbReference>
<dbReference type="STRING" id="10090.ENSMUSP00000100040"/>
<dbReference type="PhosphoSitePlus" id="Q8VE04"/>
<dbReference type="PaxDb" id="10090-ENSMUSP00000100040"/>
<dbReference type="ProteomicsDB" id="290285"/>
<dbReference type="Antibodypedia" id="56611">
    <property type="antibodies" value="318 antibodies from 22 providers"/>
</dbReference>
<dbReference type="DNASU" id="214944"/>
<dbReference type="Ensembl" id="ENSMUST00000102975.10">
    <property type="protein sequence ID" value="ENSMUSP00000100040.4"/>
    <property type="gene ID" value="ENSMUSG00000073910.11"/>
</dbReference>
<dbReference type="GeneID" id="214944"/>
<dbReference type="KEGG" id="mmu:214944"/>
<dbReference type="UCSC" id="uc008sgs.2">
    <property type="organism name" value="mouse"/>
</dbReference>
<dbReference type="AGR" id="MGI:2664539"/>
<dbReference type="CTD" id="79817"/>
<dbReference type="MGI" id="MGI:2664539">
    <property type="gene designation" value="Mob3b"/>
</dbReference>
<dbReference type="VEuPathDB" id="HostDB:ENSMUSG00000073910"/>
<dbReference type="eggNOG" id="KOG1903">
    <property type="taxonomic scope" value="Eukaryota"/>
</dbReference>
<dbReference type="GeneTree" id="ENSGT01120000271863"/>
<dbReference type="HOGENOM" id="CLU_038321_3_0_1"/>
<dbReference type="InParanoid" id="Q8VE04"/>
<dbReference type="OMA" id="WIEIRIN"/>
<dbReference type="OrthoDB" id="8170117at2759"/>
<dbReference type="PhylomeDB" id="Q8VE04"/>
<dbReference type="TreeFam" id="TF300789"/>
<dbReference type="BioGRID-ORCS" id="214944">
    <property type="hits" value="1 hit in 76 CRISPR screens"/>
</dbReference>
<dbReference type="ChiTaRS" id="Mob3b">
    <property type="organism name" value="mouse"/>
</dbReference>
<dbReference type="PRO" id="PR:Q8VE04"/>
<dbReference type="Proteomes" id="UP000000589">
    <property type="component" value="Chromosome 4"/>
</dbReference>
<dbReference type="RNAct" id="Q8VE04">
    <property type="molecule type" value="protein"/>
</dbReference>
<dbReference type="Bgee" id="ENSMUSG00000073910">
    <property type="expression patterns" value="Expressed in sciatic nerve and 170 other cell types or tissues"/>
</dbReference>
<dbReference type="GO" id="GO:0046872">
    <property type="term" value="F:metal ion binding"/>
    <property type="evidence" value="ECO:0007669"/>
    <property type="project" value="UniProtKB-KW"/>
</dbReference>
<dbReference type="GO" id="GO:0035330">
    <property type="term" value="P:regulation of hippo signaling"/>
    <property type="evidence" value="ECO:0000250"/>
    <property type="project" value="UniProtKB"/>
</dbReference>
<dbReference type="FunFam" id="1.20.140.30:FF:000001">
    <property type="entry name" value="MOB kinase activator 1A"/>
    <property type="match status" value="1"/>
</dbReference>
<dbReference type="Gene3D" id="1.20.140.30">
    <property type="entry name" value="MOB kinase activator"/>
    <property type="match status" value="1"/>
</dbReference>
<dbReference type="InterPro" id="IPR005301">
    <property type="entry name" value="MOB_kinase_act_fam"/>
</dbReference>
<dbReference type="InterPro" id="IPR036703">
    <property type="entry name" value="MOB_kinase_act_sf"/>
</dbReference>
<dbReference type="PANTHER" id="PTHR22599">
    <property type="entry name" value="MPS ONE BINDER KINASE ACTIVATOR-LIKE MOB"/>
    <property type="match status" value="1"/>
</dbReference>
<dbReference type="Pfam" id="PF03637">
    <property type="entry name" value="Mob1_phocein"/>
    <property type="match status" value="1"/>
</dbReference>
<dbReference type="SMART" id="SM01388">
    <property type="entry name" value="Mob1_phocein"/>
    <property type="match status" value="1"/>
</dbReference>
<dbReference type="SUPFAM" id="SSF101152">
    <property type="entry name" value="Mob1/phocein"/>
    <property type="match status" value="1"/>
</dbReference>
<reference key="1">
    <citation type="journal article" date="2005" name="Science">
        <title>The transcriptional landscape of the mammalian genome.</title>
        <authorList>
            <person name="Carninci P."/>
            <person name="Kasukawa T."/>
            <person name="Katayama S."/>
            <person name="Gough J."/>
            <person name="Frith M.C."/>
            <person name="Maeda N."/>
            <person name="Oyama R."/>
            <person name="Ravasi T."/>
            <person name="Lenhard B."/>
            <person name="Wells C."/>
            <person name="Kodzius R."/>
            <person name="Shimokawa K."/>
            <person name="Bajic V.B."/>
            <person name="Brenner S.E."/>
            <person name="Batalov S."/>
            <person name="Forrest A.R."/>
            <person name="Zavolan M."/>
            <person name="Davis M.J."/>
            <person name="Wilming L.G."/>
            <person name="Aidinis V."/>
            <person name="Allen J.E."/>
            <person name="Ambesi-Impiombato A."/>
            <person name="Apweiler R."/>
            <person name="Aturaliya R.N."/>
            <person name="Bailey T.L."/>
            <person name="Bansal M."/>
            <person name="Baxter L."/>
            <person name="Beisel K.W."/>
            <person name="Bersano T."/>
            <person name="Bono H."/>
            <person name="Chalk A.M."/>
            <person name="Chiu K.P."/>
            <person name="Choudhary V."/>
            <person name="Christoffels A."/>
            <person name="Clutterbuck D.R."/>
            <person name="Crowe M.L."/>
            <person name="Dalla E."/>
            <person name="Dalrymple B.P."/>
            <person name="de Bono B."/>
            <person name="Della Gatta G."/>
            <person name="di Bernardo D."/>
            <person name="Down T."/>
            <person name="Engstrom P."/>
            <person name="Fagiolini M."/>
            <person name="Faulkner G."/>
            <person name="Fletcher C.F."/>
            <person name="Fukushima T."/>
            <person name="Furuno M."/>
            <person name="Futaki S."/>
            <person name="Gariboldi M."/>
            <person name="Georgii-Hemming P."/>
            <person name="Gingeras T.R."/>
            <person name="Gojobori T."/>
            <person name="Green R.E."/>
            <person name="Gustincich S."/>
            <person name="Harbers M."/>
            <person name="Hayashi Y."/>
            <person name="Hensch T.K."/>
            <person name="Hirokawa N."/>
            <person name="Hill D."/>
            <person name="Huminiecki L."/>
            <person name="Iacono M."/>
            <person name="Ikeo K."/>
            <person name="Iwama A."/>
            <person name="Ishikawa T."/>
            <person name="Jakt M."/>
            <person name="Kanapin A."/>
            <person name="Katoh M."/>
            <person name="Kawasawa Y."/>
            <person name="Kelso J."/>
            <person name="Kitamura H."/>
            <person name="Kitano H."/>
            <person name="Kollias G."/>
            <person name="Krishnan S.P."/>
            <person name="Kruger A."/>
            <person name="Kummerfeld S.K."/>
            <person name="Kurochkin I.V."/>
            <person name="Lareau L.F."/>
            <person name="Lazarevic D."/>
            <person name="Lipovich L."/>
            <person name="Liu J."/>
            <person name="Liuni S."/>
            <person name="McWilliam S."/>
            <person name="Madan Babu M."/>
            <person name="Madera M."/>
            <person name="Marchionni L."/>
            <person name="Matsuda H."/>
            <person name="Matsuzawa S."/>
            <person name="Miki H."/>
            <person name="Mignone F."/>
            <person name="Miyake S."/>
            <person name="Morris K."/>
            <person name="Mottagui-Tabar S."/>
            <person name="Mulder N."/>
            <person name="Nakano N."/>
            <person name="Nakauchi H."/>
            <person name="Ng P."/>
            <person name="Nilsson R."/>
            <person name="Nishiguchi S."/>
            <person name="Nishikawa S."/>
            <person name="Nori F."/>
            <person name="Ohara O."/>
            <person name="Okazaki Y."/>
            <person name="Orlando V."/>
            <person name="Pang K.C."/>
            <person name="Pavan W.J."/>
            <person name="Pavesi G."/>
            <person name="Pesole G."/>
            <person name="Petrovsky N."/>
            <person name="Piazza S."/>
            <person name="Reed J."/>
            <person name="Reid J.F."/>
            <person name="Ring B.Z."/>
            <person name="Ringwald M."/>
            <person name="Rost B."/>
            <person name="Ruan Y."/>
            <person name="Salzberg S.L."/>
            <person name="Sandelin A."/>
            <person name="Schneider C."/>
            <person name="Schoenbach C."/>
            <person name="Sekiguchi K."/>
            <person name="Semple C.A."/>
            <person name="Seno S."/>
            <person name="Sessa L."/>
            <person name="Sheng Y."/>
            <person name="Shibata Y."/>
            <person name="Shimada H."/>
            <person name="Shimada K."/>
            <person name="Silva D."/>
            <person name="Sinclair B."/>
            <person name="Sperling S."/>
            <person name="Stupka E."/>
            <person name="Sugiura K."/>
            <person name="Sultana R."/>
            <person name="Takenaka Y."/>
            <person name="Taki K."/>
            <person name="Tammoja K."/>
            <person name="Tan S.L."/>
            <person name="Tang S."/>
            <person name="Taylor M.S."/>
            <person name="Tegner J."/>
            <person name="Teichmann S.A."/>
            <person name="Ueda H.R."/>
            <person name="van Nimwegen E."/>
            <person name="Verardo R."/>
            <person name="Wei C.L."/>
            <person name="Yagi K."/>
            <person name="Yamanishi H."/>
            <person name="Zabarovsky E."/>
            <person name="Zhu S."/>
            <person name="Zimmer A."/>
            <person name="Hide W."/>
            <person name="Bult C."/>
            <person name="Grimmond S.M."/>
            <person name="Teasdale R.D."/>
            <person name="Liu E.T."/>
            <person name="Brusic V."/>
            <person name="Quackenbush J."/>
            <person name="Wahlestedt C."/>
            <person name="Mattick J.S."/>
            <person name="Hume D.A."/>
            <person name="Kai C."/>
            <person name="Sasaki D."/>
            <person name="Tomaru Y."/>
            <person name="Fukuda S."/>
            <person name="Kanamori-Katayama M."/>
            <person name="Suzuki M."/>
            <person name="Aoki J."/>
            <person name="Arakawa T."/>
            <person name="Iida J."/>
            <person name="Imamura K."/>
            <person name="Itoh M."/>
            <person name="Kato T."/>
            <person name="Kawaji H."/>
            <person name="Kawagashira N."/>
            <person name="Kawashima T."/>
            <person name="Kojima M."/>
            <person name="Kondo S."/>
            <person name="Konno H."/>
            <person name="Nakano K."/>
            <person name="Ninomiya N."/>
            <person name="Nishio T."/>
            <person name="Okada M."/>
            <person name="Plessy C."/>
            <person name="Shibata K."/>
            <person name="Shiraki T."/>
            <person name="Suzuki S."/>
            <person name="Tagami M."/>
            <person name="Waki K."/>
            <person name="Watahiki A."/>
            <person name="Okamura-Oho Y."/>
            <person name="Suzuki H."/>
            <person name="Kawai J."/>
            <person name="Hayashizaki Y."/>
        </authorList>
    </citation>
    <scope>NUCLEOTIDE SEQUENCE [LARGE SCALE MRNA]</scope>
    <source>
        <strain>C57BL/6J</strain>
        <strain>NOD</strain>
        <tissue>Dendritic cell</tissue>
        <tissue>Thymus</tissue>
    </source>
</reference>
<reference key="2">
    <citation type="journal article" date="2004" name="Genome Res.">
        <title>The status, quality, and expansion of the NIH full-length cDNA project: the Mammalian Gene Collection (MGC).</title>
        <authorList>
            <consortium name="The MGC Project Team"/>
        </authorList>
    </citation>
    <scope>NUCLEOTIDE SEQUENCE [LARGE SCALE MRNA]</scope>
    <source>
        <strain>Czech II</strain>
        <tissue>Mammary tumor</tissue>
    </source>
</reference>
<name>MOB3B_MOUSE</name>